<gene>
    <name evidence="1" type="primary">nhaP2</name>
    <name type="synonym">cvrA</name>
    <name type="ordered locus">Shewana3_0847</name>
</gene>
<comment type="function">
    <text evidence="1">K(+)/H(+) antiporter that extrudes potassium in exchange for external protons and maintains the internal concentration of potassium under toxic levels.</text>
</comment>
<comment type="catalytic activity">
    <reaction evidence="1">
        <text>K(+)(in) + H(+)(out) = K(+)(out) + H(+)(in)</text>
        <dbReference type="Rhea" id="RHEA:29467"/>
        <dbReference type="ChEBI" id="CHEBI:15378"/>
        <dbReference type="ChEBI" id="CHEBI:29103"/>
    </reaction>
    <physiologicalReaction direction="left-to-right" evidence="1">
        <dbReference type="Rhea" id="RHEA:29468"/>
    </physiologicalReaction>
</comment>
<comment type="subcellular location">
    <subcellularLocation>
        <location evidence="1">Cell inner membrane</location>
        <topology evidence="1">Multi-pass membrane protein</topology>
    </subcellularLocation>
</comment>
<comment type="similarity">
    <text evidence="1">Belongs to the monovalent cation:proton antiporter 1 (CPA1) transporter (TC 2.A.36) family. NhaP2 subfamily.</text>
</comment>
<proteinExistence type="inferred from homology"/>
<evidence type="ECO:0000255" key="1">
    <source>
        <dbReference type="HAMAP-Rule" id="MF_01075"/>
    </source>
</evidence>
<reference key="1">
    <citation type="submission" date="2006-09" db="EMBL/GenBank/DDBJ databases">
        <title>Complete sequence of chromosome 1 of Shewanella sp. ANA-3.</title>
        <authorList>
            <person name="Copeland A."/>
            <person name="Lucas S."/>
            <person name="Lapidus A."/>
            <person name="Barry K."/>
            <person name="Detter J.C."/>
            <person name="Glavina del Rio T."/>
            <person name="Hammon N."/>
            <person name="Israni S."/>
            <person name="Dalin E."/>
            <person name="Tice H."/>
            <person name="Pitluck S."/>
            <person name="Chertkov O."/>
            <person name="Brettin T."/>
            <person name="Bruce D."/>
            <person name="Han C."/>
            <person name="Tapia R."/>
            <person name="Gilna P."/>
            <person name="Schmutz J."/>
            <person name="Larimer F."/>
            <person name="Land M."/>
            <person name="Hauser L."/>
            <person name="Kyrpides N."/>
            <person name="Kim E."/>
            <person name="Newman D."/>
            <person name="Salticov C."/>
            <person name="Konstantinidis K."/>
            <person name="Klappenback J."/>
            <person name="Tiedje J."/>
            <person name="Richardson P."/>
        </authorList>
    </citation>
    <scope>NUCLEOTIDE SEQUENCE [LARGE SCALE GENOMIC DNA]</scope>
    <source>
        <strain>ANA-3</strain>
    </source>
</reference>
<name>NHAP2_SHESA</name>
<keyword id="KW-0050">Antiport</keyword>
<keyword id="KW-0997">Cell inner membrane</keyword>
<keyword id="KW-1003">Cell membrane</keyword>
<keyword id="KW-0406">Ion transport</keyword>
<keyword id="KW-0472">Membrane</keyword>
<keyword id="KW-0630">Potassium</keyword>
<keyword id="KW-0633">Potassium transport</keyword>
<keyword id="KW-0812">Transmembrane</keyword>
<keyword id="KW-1133">Transmembrane helix</keyword>
<keyword id="KW-0813">Transport</keyword>
<dbReference type="EMBL" id="CP000469">
    <property type="protein sequence ID" value="ABK47085.1"/>
    <property type="molecule type" value="Genomic_DNA"/>
</dbReference>
<dbReference type="RefSeq" id="WP_011715990.1">
    <property type="nucleotide sequence ID" value="NC_008577.1"/>
</dbReference>
<dbReference type="SMR" id="A0KTG6"/>
<dbReference type="STRING" id="94122.Shewana3_0847"/>
<dbReference type="KEGG" id="shn:Shewana3_0847"/>
<dbReference type="eggNOG" id="COG3263">
    <property type="taxonomic scope" value="Bacteria"/>
</dbReference>
<dbReference type="HOGENOM" id="CLU_005912_9_2_6"/>
<dbReference type="OrthoDB" id="9810759at2"/>
<dbReference type="Proteomes" id="UP000002589">
    <property type="component" value="Chromosome"/>
</dbReference>
<dbReference type="GO" id="GO:0005886">
    <property type="term" value="C:plasma membrane"/>
    <property type="evidence" value="ECO:0007669"/>
    <property type="project" value="UniProtKB-SubCell"/>
</dbReference>
<dbReference type="GO" id="GO:0050660">
    <property type="term" value="F:flavin adenine dinucleotide binding"/>
    <property type="evidence" value="ECO:0007669"/>
    <property type="project" value="InterPro"/>
</dbReference>
<dbReference type="GO" id="GO:0015386">
    <property type="term" value="F:potassium:proton antiporter activity"/>
    <property type="evidence" value="ECO:0007669"/>
    <property type="project" value="UniProtKB-UniRule"/>
</dbReference>
<dbReference type="GO" id="GO:0006884">
    <property type="term" value="P:cell volume homeostasis"/>
    <property type="evidence" value="ECO:0007669"/>
    <property type="project" value="InterPro"/>
</dbReference>
<dbReference type="Gene3D" id="1.20.1530.20">
    <property type="match status" value="1"/>
</dbReference>
<dbReference type="Gene3D" id="3.30.70.1450">
    <property type="entry name" value="Regulator of K+ conductance, C-terminal domain"/>
    <property type="match status" value="1"/>
</dbReference>
<dbReference type="HAMAP" id="MF_01075">
    <property type="entry name" value="NhaP2"/>
    <property type="match status" value="1"/>
</dbReference>
<dbReference type="InterPro" id="IPR006153">
    <property type="entry name" value="Cation/H_exchanger_TM"/>
</dbReference>
<dbReference type="InterPro" id="IPR036318">
    <property type="entry name" value="FAD-bd_PCMH-like_sf"/>
</dbReference>
<dbReference type="InterPro" id="IPR038770">
    <property type="entry name" value="Na+/solute_symporter_sf"/>
</dbReference>
<dbReference type="InterPro" id="IPR023729">
    <property type="entry name" value="NhaP2"/>
</dbReference>
<dbReference type="InterPro" id="IPR006037">
    <property type="entry name" value="RCK_C"/>
</dbReference>
<dbReference type="InterPro" id="IPR036721">
    <property type="entry name" value="RCK_C_sf"/>
</dbReference>
<dbReference type="InterPro" id="IPR005170">
    <property type="entry name" value="Transptr-assoc_dom"/>
</dbReference>
<dbReference type="NCBIfam" id="NF003714">
    <property type="entry name" value="PRK05326.1-1"/>
    <property type="match status" value="1"/>
</dbReference>
<dbReference type="NCBIfam" id="NF003715">
    <property type="entry name" value="PRK05326.1-2"/>
    <property type="match status" value="1"/>
</dbReference>
<dbReference type="NCBIfam" id="NF003716">
    <property type="entry name" value="PRK05326.1-3"/>
    <property type="match status" value="1"/>
</dbReference>
<dbReference type="PANTHER" id="PTHR32507:SF7">
    <property type="entry name" value="K(+)_H(+) ANTIPORTER NHAP2"/>
    <property type="match status" value="1"/>
</dbReference>
<dbReference type="PANTHER" id="PTHR32507">
    <property type="entry name" value="NA(+)/H(+) ANTIPORTER 1"/>
    <property type="match status" value="1"/>
</dbReference>
<dbReference type="Pfam" id="PF03471">
    <property type="entry name" value="CorC_HlyC"/>
    <property type="match status" value="1"/>
</dbReference>
<dbReference type="Pfam" id="PF00999">
    <property type="entry name" value="Na_H_Exchanger"/>
    <property type="match status" value="1"/>
</dbReference>
<dbReference type="Pfam" id="PF02080">
    <property type="entry name" value="TrkA_C"/>
    <property type="match status" value="1"/>
</dbReference>
<dbReference type="SMART" id="SM01091">
    <property type="entry name" value="CorC_HlyC"/>
    <property type="match status" value="1"/>
</dbReference>
<dbReference type="SUPFAM" id="SSF56176">
    <property type="entry name" value="FAD-binding/transporter-associated domain-like"/>
    <property type="match status" value="1"/>
</dbReference>
<dbReference type="SUPFAM" id="SSF116726">
    <property type="entry name" value="TrkA C-terminal domain-like"/>
    <property type="match status" value="1"/>
</dbReference>
<dbReference type="PROSITE" id="PS51202">
    <property type="entry name" value="RCK_C"/>
    <property type="match status" value="1"/>
</dbReference>
<sequence length="574" mass="61502">MDADSINSFFLIGALLAAVSVLLSPVSSRLGIPILLIFLAVGILAGEDGPGGILFDDYSTAYLVSNLALAIILLDGGMRTRVASFRVALWPALSLATFGVAITTSITGVMAAWLFDLHWLQGLLVGAIVGSTDAAAVFSLLKGRSLNERVGATLEIESGSNDPMAVFLTVTLIAILANVDAELSVSFMLISFIKQFGLGIFLGLGGGWLLWKLVNLSKLAEGLYSILVLSGGLMIYAASNKLGGSGILSIYLVGLFLGNKPTRGRHSILNVLDGMTWVSQIGMFLVLGLLLTPSDLLDIWLPGLALAFGMILFARPLAVWLSLLPFKSFSSRDRWFISWVGLRGAVPIILAVFPMMAGLPGAQLYFNLAFFVVLVSLLVQGASLTTAARLAKVELPPKPLPISRSGVEIYPSSEWEVFVYHLSENKWCIGEPLKRLSMPDGTRIAAVFRHNTLLHPSGSTCLEAGDILCVLGQEKSLEALSNLFSQAPETKEVPRFFGDFFIDTEVKLLDLAPIYGLELDEATGDMTVADLVAAELGSHPVLGDQFLWQSLHWVVAGLNEGKVTNVGIRLPAEA</sequence>
<accession>A0KTG6</accession>
<feature type="chain" id="PRO_1000064675" description="K(+)/H(+) antiporter NhaP2">
    <location>
        <begin position="1"/>
        <end position="574"/>
    </location>
</feature>
<feature type="transmembrane region" description="Helical" evidence="1">
    <location>
        <begin position="6"/>
        <end position="26"/>
    </location>
</feature>
<feature type="transmembrane region" description="Helical" evidence="1">
    <location>
        <begin position="34"/>
        <end position="54"/>
    </location>
</feature>
<feature type="transmembrane region" description="Helical" evidence="1">
    <location>
        <begin position="58"/>
        <end position="78"/>
    </location>
</feature>
<feature type="transmembrane region" description="Helical" evidence="1">
    <location>
        <begin position="87"/>
        <end position="107"/>
    </location>
</feature>
<feature type="transmembrane region" description="Helical" evidence="1">
    <location>
        <begin position="109"/>
        <end position="129"/>
    </location>
</feature>
<feature type="transmembrane region" description="Helical" evidence="1">
    <location>
        <begin position="173"/>
        <end position="193"/>
    </location>
</feature>
<feature type="transmembrane region" description="Helical" evidence="1">
    <location>
        <begin position="196"/>
        <end position="216"/>
    </location>
</feature>
<feature type="transmembrane region" description="Helical" evidence="1">
    <location>
        <begin position="219"/>
        <end position="239"/>
    </location>
</feature>
<feature type="transmembrane region" description="Helical" evidence="1">
    <location>
        <begin position="242"/>
        <end position="262"/>
    </location>
</feature>
<feature type="transmembrane region" description="Helical" evidence="1">
    <location>
        <begin position="271"/>
        <end position="291"/>
    </location>
</feature>
<feature type="transmembrane region" description="Helical" evidence="1">
    <location>
        <begin position="299"/>
        <end position="319"/>
    </location>
</feature>
<feature type="transmembrane region" description="Helical" evidence="1">
    <location>
        <begin position="335"/>
        <end position="355"/>
    </location>
</feature>
<feature type="transmembrane region" description="Helical" evidence="1">
    <location>
        <begin position="359"/>
        <end position="379"/>
    </location>
</feature>
<feature type="domain" description="RCK C-terminal" evidence="1">
    <location>
        <begin position="405"/>
        <end position="486"/>
    </location>
</feature>
<organism>
    <name type="scientific">Shewanella sp. (strain ANA-3)</name>
    <dbReference type="NCBI Taxonomy" id="94122"/>
    <lineage>
        <taxon>Bacteria</taxon>
        <taxon>Pseudomonadati</taxon>
        <taxon>Pseudomonadota</taxon>
        <taxon>Gammaproteobacteria</taxon>
        <taxon>Alteromonadales</taxon>
        <taxon>Shewanellaceae</taxon>
        <taxon>Shewanella</taxon>
    </lineage>
</organism>
<protein>
    <recommendedName>
        <fullName evidence="1">K(+)/H(+) antiporter NhaP2</fullName>
    </recommendedName>
    <alternativeName>
        <fullName evidence="1">Potassium/proton antiporter NhaP2</fullName>
    </alternativeName>
</protein>